<sequence>MLTAAVLSCALLLALPATRGAQMGLAPMEGIRRPDQALLPELPGLGLRAPLKKTTAEQAEEDLLQEAQALAEVLDLQDREPRSSRRCVRLHESCLGQQVPCCDPCATCYCRFFNAFCYCRKLGTAMNPCSRT</sequence>
<comment type="function">
    <text evidence="1 4 5 9 11 14">Plays a role in weight homeostasis. Involved in the control of feeding behavior through the central melanocortin system. Acts as alpha melanocyte-stimulating hormone antagonist by inhibiting cAMP production mediated by stimulation of melanocortin receptors within the hypothalamus and adrenal gland. Has very low activity with MC5R (By similarity). Is an inverse agonist for MC3R and MC4R being able to suppress their constitutive activity. It promotes MC3R and MC4R endocytosis in an arrestin-dependent manner.</text>
</comment>
<comment type="subunit">
    <text evidence="14">Interacts with melanocortin receptors MC3R, MC4R and MC5R.</text>
</comment>
<comment type="subcellular location">
    <subcellularLocation>
        <location evidence="9">Secreted</location>
    </subcellularLocation>
    <subcellularLocation>
        <location evidence="9">Golgi apparatus lumen</location>
    </subcellularLocation>
</comment>
<comment type="tissue specificity">
    <text>Expressed primarily in the adrenal gland, subthalamic nucleus, and hypothalamus, with a lower level of expression occurring in testis, lung, and kidney.</text>
</comment>
<comment type="domain">
    <text evidence="7">The presence of a 'disulfide through disulfide knot' structurally defines this protein as a knottin.</text>
</comment>
<comment type="disease">
    <disease id="DI-01221">
        <name>Obesity</name>
        <acronym>OBESITY</acronym>
        <description>A condition characterized by an increase of body weight beyond the limitation of skeletal and physical requirements, as the result of excessive accumulation of body fat.</description>
        <dbReference type="MIM" id="601665"/>
    </disease>
    <text>Disease susceptibility is associated with variants affecting the gene represented in this entry.</text>
</comment>
<gene>
    <name type="primary">AGRP</name>
    <name type="synonym">AGRT</name>
    <name type="synonym">ART</name>
</gene>
<keyword id="KW-0002">3D-structure</keyword>
<keyword id="KW-0225">Disease variant</keyword>
<keyword id="KW-1015">Disulfide bond</keyword>
<keyword id="KW-0333">Golgi apparatus</keyword>
<keyword id="KW-0960">Knottin</keyword>
<keyword id="KW-0550">Obesity</keyword>
<keyword id="KW-1267">Proteomics identification</keyword>
<keyword id="KW-1185">Reference proteome</keyword>
<keyword id="KW-0964">Secreted</keyword>
<keyword id="KW-0732">Signal</keyword>
<proteinExistence type="evidence at protein level"/>
<protein>
    <recommendedName>
        <fullName>Agouti-related protein</fullName>
    </recommendedName>
</protein>
<feature type="signal peptide" evidence="2">
    <location>
        <begin position="1"/>
        <end position="20"/>
    </location>
</feature>
<feature type="propeptide" id="PRO_0000434044" evidence="10 12">
    <location>
        <begin position="21"/>
        <end position="82"/>
    </location>
</feature>
<feature type="chain" id="PRO_0000001034" description="Agouti-related protein">
    <location>
        <begin position="83"/>
        <end position="132"/>
    </location>
</feature>
<feature type="domain" description="Agouti" evidence="3">
    <location>
        <begin position="87"/>
        <end position="129"/>
    </location>
</feature>
<feature type="region of interest" description="Interaction with melanocortin receptors">
    <location>
        <begin position="111"/>
        <end position="113"/>
    </location>
</feature>
<feature type="site" description="Cleavage; by PCSK1" evidence="10">
    <location>
        <begin position="82"/>
        <end position="83"/>
    </location>
</feature>
<feature type="disulfide bond" evidence="4 7 13">
    <location>
        <begin position="87"/>
        <end position="102"/>
    </location>
</feature>
<feature type="disulfide bond" evidence="4 7 13">
    <location>
        <begin position="94"/>
        <end position="108"/>
    </location>
</feature>
<feature type="disulfide bond" evidence="4 7 13">
    <location>
        <begin position="101"/>
        <end position="119"/>
    </location>
</feature>
<feature type="disulfide bond" evidence="4 7 13">
    <location>
        <begin position="105"/>
        <end position="129"/>
    </location>
</feature>
<feature type="disulfide bond" evidence="4 7 13">
    <location>
        <begin position="110"/>
        <end position="117"/>
    </location>
</feature>
<feature type="sequence variant" id="VAR_015385" description="May play a role in obesity in an age-dependent manner; apparently no effect on activity; dbSNP:rs5030980." evidence="6 8 9">
    <original>A</original>
    <variation>T</variation>
    <location>
        <position position="67"/>
    </location>
</feature>
<feature type="mutagenesis site" description="Cleavage is blocked." evidence="10">
    <original>REPR</original>
    <variation>AEPA</variation>
    <location>
        <begin position="79"/>
        <end position="82"/>
    </location>
</feature>
<feature type="mutagenesis site" description="No effect on cleavage." evidence="10">
    <original>RR</original>
    <variation>AA</variation>
    <location>
        <begin position="85"/>
        <end position="86"/>
    </location>
</feature>
<feature type="mutagenesis site" description="No effect on cleavage." evidence="10">
    <original>RCVR</original>
    <variation>ACVA</variation>
    <location>
        <begin position="86"/>
        <end position="89"/>
    </location>
</feature>
<feature type="mutagenesis site" description="Abolishes inhibition of cAMP production in response to melanocortin receptor stimulation." evidence="4">
    <original>R</original>
    <variation>A</variation>
    <location>
        <position position="111"/>
    </location>
</feature>
<feature type="sequence conflict" description="In Ref. 2; AAB68621." evidence="15" ref="2">
    <original>V</original>
    <variation>L</variation>
    <location>
        <position position="6"/>
    </location>
</feature>
<feature type="strand" evidence="16">
    <location>
        <begin position="95"/>
        <end position="97"/>
    </location>
</feature>
<feature type="strand" evidence="16">
    <location>
        <begin position="101"/>
        <end position="103"/>
    </location>
</feature>
<feature type="strand" evidence="16">
    <location>
        <begin position="107"/>
        <end position="115"/>
    </location>
</feature>
<feature type="strand" evidence="16">
    <location>
        <begin position="117"/>
        <end position="120"/>
    </location>
</feature>
<feature type="strand" evidence="16">
    <location>
        <begin position="125"/>
        <end position="127"/>
    </location>
</feature>
<reference key="1">
    <citation type="journal article" date="1997" name="Genes Dev.">
        <title>Hypothalamic expression of ART, a novel gene related to agouti, is up-regulated in obese and diabetic mutant mice.</title>
        <authorList>
            <person name="Shutter J.R."/>
            <person name="Graham M."/>
            <person name="Kinsey A.C."/>
            <person name="Scully S."/>
            <person name="Luethy R."/>
            <person name="Stark K.L."/>
        </authorList>
    </citation>
    <scope>NUCLEOTIDE SEQUENCE [MRNA]</scope>
</reference>
<reference key="2">
    <citation type="journal article" date="1997" name="Science">
        <title>Antagonism of central melanocortin receptors in vitro and in vivo by agouti-related protein.</title>
        <authorList>
            <person name="Ollmann M.M."/>
            <person name="Wilson B.D."/>
            <person name="Yang Y.K."/>
            <person name="Kerns J.A."/>
            <person name="Chen Y."/>
            <person name="Gantz I."/>
            <person name="Barsh G.S."/>
        </authorList>
    </citation>
    <scope>NUCLEOTIDE SEQUENCE [MRNA]</scope>
    <source>
        <tissue>Adrenal gland</tissue>
    </source>
</reference>
<reference key="3">
    <citation type="journal article" date="2001" name="Gene">
        <title>The gene structure and minimal promoter of the human agouti related protein.</title>
        <authorList>
            <person name="Brown A.M."/>
            <person name="Mayfield D.K."/>
            <person name="Volaufova J."/>
            <person name="Argyropoulos G."/>
        </authorList>
    </citation>
    <scope>NUCLEOTIDE SEQUENCE [GENOMIC DNA]</scope>
    <scope>VARIANT THR-67</scope>
</reference>
<reference key="4">
    <citation type="journal article" date="2001" name="Mol. Psychiatry">
        <title>Association between an agouti-related protein gene polymorphism and anorexia nervosa.</title>
        <authorList>
            <person name="Vink T."/>
            <person name="Hinney A."/>
            <person name="van Elburg A.A."/>
            <person name="van Goozen S.H."/>
            <person name="Sandkuijl L.A."/>
            <person name="Sinke R.J."/>
            <person name="Herpertz-Dahlmann B.M."/>
            <person name="Hebebrand J."/>
            <person name="Remschmidt H."/>
            <person name="van Engeland H."/>
            <person name="Adan R.A."/>
        </authorList>
    </citation>
    <scope>NUCLEOTIDE SEQUENCE [GENOMIC DNA]</scope>
</reference>
<reference key="5">
    <citation type="submission" date="2006-01" db="EMBL/GenBank/DDBJ databases">
        <authorList>
            <consortium name="SeattleSNPs variation discovery resource"/>
        </authorList>
    </citation>
    <scope>NUCLEOTIDE SEQUENCE [GENOMIC DNA]</scope>
</reference>
<reference key="6">
    <citation type="journal article" date="2004" name="Genome Res.">
        <title>The status, quality, and expansion of the NIH full-length cDNA project: the Mammalian Gene Collection (MGC).</title>
        <authorList>
            <consortium name="The MGC Project Team"/>
        </authorList>
    </citation>
    <scope>NUCLEOTIDE SEQUENCE [LARGE SCALE MRNA]</scope>
</reference>
<reference key="7">
    <citation type="journal article" date="1998" name="Biochemistry">
        <title>Determination of disulfide structure in agouti-related protein (AGRP) by stepwise reduction and alkylation.</title>
        <authorList>
            <person name="Bures E.J."/>
            <person name="Hui J.O."/>
            <person name="Young Y."/>
            <person name="Chow D.T."/>
            <person name="Katta V."/>
            <person name="Rohde M.F."/>
            <person name="Zeni L."/>
            <person name="Rosenfeld R.D."/>
            <person name="Stark K.L."/>
            <person name="Haniu M."/>
        </authorList>
    </citation>
    <scope>DISULFIDE BONDS</scope>
</reference>
<reference key="8">
    <citation type="journal article" date="1999" name="Mol. Endocrinol.">
        <title>Characterization of Agouti-related protein binding to melanocortin receptors.</title>
        <authorList>
            <person name="Yang Y.K."/>
            <person name="Thompson D.A."/>
            <person name="Dickinson C.J."/>
            <person name="Wilken J."/>
            <person name="Barsh G.S."/>
            <person name="Kent S.B."/>
            <person name="Gantz I."/>
        </authorList>
    </citation>
    <scope>FUNCTION</scope>
    <scope>INTERACTION WITH MC3R; MC4R AND MC5R</scope>
</reference>
<reference key="9">
    <citation type="journal article" date="2001" name="Mol. Endocrinol.">
        <title>AgRP(83-132) acts as an inverse agonist on the human-melanocortin-4 receptor.</title>
        <authorList>
            <person name="Nijenhuis W.A."/>
            <person name="Oosterom J."/>
            <person name="Adan R.A."/>
        </authorList>
    </citation>
    <scope>FUNCTION AS INVERSE AGONIST FOR MC3R AND MC4R</scope>
</reference>
<reference key="10">
    <citation type="journal article" date="2006" name="Chem. Biol.">
        <title>Structural and molecular evolutionary analysis of Agouti and Agouti-related proteins.</title>
        <authorList>
            <person name="Jackson P.J."/>
            <person name="Douglas N.R."/>
            <person name="Chai B."/>
            <person name="Binkley J."/>
            <person name="Sidow A."/>
            <person name="Barsh G.S."/>
            <person name="Millhauser G.L."/>
        </authorList>
    </citation>
    <scope>IDENTIFICATION OF MATURE N-TERMINUS</scope>
</reference>
<reference key="11">
    <citation type="journal article" date="2006" name="Endocrinology">
        <title>Agouti-related protein is posttranslationally cleaved by proprotein convertase 1 to generate agouti-related protein (AGRP)83-132: interaction between AGRP83-132 and melanocortin receptors cannot be influenced by syndecan-3.</title>
        <authorList>
            <person name="Creemers J.W."/>
            <person name="Pritchard L.E."/>
            <person name="Gyte A."/>
            <person name="Le Rouzic P."/>
            <person name="Meulemans S."/>
            <person name="Wardlaw S.L."/>
            <person name="Zhu X."/>
            <person name="Steiner D.F."/>
            <person name="Davies N."/>
            <person name="Armstrong D."/>
            <person name="Lawrence C.B."/>
            <person name="Luckman S.M."/>
            <person name="Schmitz C.A."/>
            <person name="Davies R.A."/>
            <person name="Brennand J.C."/>
            <person name="White A."/>
        </authorList>
    </citation>
    <scope>IDENTIFICATION OF MATURE N-TERMINUS</scope>
    <scope>CLEAVAGE BY PCSK1</scope>
    <scope>MUTAGENESIS OF 79-ARG--ARG-82; 85-ARG-ARG-86 AND 86-ARG--ARG-89</scope>
</reference>
<reference key="12">
    <citation type="journal article" date="2006" name="J. Biol. Chem.">
        <title>The natural inverse agonist agouti-related protein induces arrestin-mediated endocytosis of melanocortin-3 and -4 receptors.</title>
        <authorList>
            <person name="Breit A."/>
            <person name="Wolff K."/>
            <person name="Kalwa H."/>
            <person name="Jarry H."/>
            <person name="Buch T."/>
            <person name="Gudermann T."/>
        </authorList>
    </citation>
    <scope>FUNCTION IN MC3R AND MC4R ENDOCYTOSIS</scope>
</reference>
<reference key="13">
    <citation type="journal article" date="1999" name="FEBS Lett.">
        <title>NMR structure of a minimized human agouti related protein prepared by total chemical synthesis.</title>
        <authorList>
            <person name="Bolin K.A."/>
            <person name="Anderson D.J."/>
            <person name="Trulson J.A."/>
            <person name="Thompson D.A."/>
            <person name="Wilken J."/>
            <person name="Kent S.B.H."/>
            <person name="Gantz I."/>
            <person name="Millhauser G.L."/>
        </authorList>
    </citation>
    <scope>STRUCTURE BY NMR OF 87-132</scope>
    <scope>FUNCTION</scope>
    <scope>CIRCULAR DICHROISM</scope>
    <scope>DISULFIDE BONDS</scope>
    <scope>MUTAGENESIS OF ARG-111</scope>
</reference>
<reference key="14">
    <citation type="journal article" date="2001" name="Biochemistry">
        <title>High-resolution NMR structure of the chemically-synthesized melanocortin receptor binding domain AGRP(87-132) of the agouti-related protein.</title>
        <authorList>
            <person name="McNulty J.C."/>
            <person name="Thompson D.A."/>
            <person name="Bolin K.A."/>
            <person name="Wilken J."/>
            <person name="Barsh G.S."/>
            <person name="Millhauser G.L."/>
        </authorList>
    </citation>
    <scope>STRUCTURE BY NMR OF 87-132</scope>
    <scope>DOMAIN</scope>
    <scope>DISULFIDE BONDS</scope>
</reference>
<reference key="15">
    <citation type="journal article" date="2002" name="Biochemistry">
        <title>Design, pharmacology, and NMR structure of a minimized cystine knot with agouti-related protein activity.</title>
        <authorList>
            <person name="Jackson P.J."/>
            <person name="McNulty J.C."/>
            <person name="Yang Y.K."/>
            <person name="Thompson D.A."/>
            <person name="Chai B."/>
            <person name="Gantz I."/>
            <person name="Barsh G.S."/>
            <person name="Millhauser G.L."/>
        </authorList>
    </citation>
    <scope>STRUCTURE BY NMR OF 87-120</scope>
</reference>
<reference key="16">
    <citation type="journal article" date="2002" name="J. Clin. Endocrinol. Metab.">
        <title>A polymorphism in the human agouti-related protein is associated with late-onset obesity.</title>
        <authorList>
            <person name="Argyropoulos G."/>
            <person name="Rankinen T."/>
            <person name="Neufeld D.R."/>
            <person name="Rice T."/>
            <person name="Province M.A."/>
            <person name="Leon A.S."/>
            <person name="Skinner J.S."/>
            <person name="Wilmore J.H."/>
            <person name="Rao D.C."/>
            <person name="Bouchard C."/>
        </authorList>
    </citation>
    <scope>VARIANT THR-67</scope>
    <scope>POSSIBLE ASSOCIATION WITH OBESITY</scope>
</reference>
<reference key="17">
    <citation type="journal article" date="2005" name="Biochem. Pharmacol.">
        <title>Functional analysis of the Ala67Thr polymorphism in agouti related protein associated with anorexia nervosa and leanness.</title>
        <authorList>
            <person name="de Rijke C.E."/>
            <person name="Jackson P.J."/>
            <person name="Garner K.M."/>
            <person name="van Rozen R.J."/>
            <person name="Douglas N.R."/>
            <person name="Kas M.J."/>
            <person name="Millhauser G.L."/>
            <person name="Adan R.A."/>
        </authorList>
    </citation>
    <scope>CHARACTERIZATION OF VARIANT THR-67</scope>
    <scope>SUBCELLULAR LOCATION</scope>
    <scope>FUNCTION</scope>
</reference>
<dbReference type="EMBL" id="U88063">
    <property type="protein sequence ID" value="AAB52240.1"/>
    <property type="molecule type" value="mRNA"/>
</dbReference>
<dbReference type="EMBL" id="U89485">
    <property type="protein sequence ID" value="AAB68621.1"/>
    <property type="molecule type" value="mRNA"/>
</dbReference>
<dbReference type="EMBL" id="AF314194">
    <property type="protein sequence ID" value="AAL09457.1"/>
    <property type="molecule type" value="Genomic_DNA"/>
</dbReference>
<dbReference type="EMBL" id="AF281309">
    <property type="protein sequence ID" value="AAK96256.1"/>
    <property type="molecule type" value="Genomic_DNA"/>
</dbReference>
<dbReference type="EMBL" id="DQ374394">
    <property type="protein sequence ID" value="ABC88473.1"/>
    <property type="molecule type" value="Genomic_DNA"/>
</dbReference>
<dbReference type="EMBL" id="BC110443">
    <property type="protein sequence ID" value="AAI10444.1"/>
    <property type="molecule type" value="mRNA"/>
</dbReference>
<dbReference type="CCDS" id="CCDS10839.1"/>
<dbReference type="RefSeq" id="NP_001129.1">
    <property type="nucleotide sequence ID" value="NM_001138.2"/>
</dbReference>
<dbReference type="RefSeq" id="XP_047289650.1">
    <property type="nucleotide sequence ID" value="XM_047433694.1"/>
</dbReference>
<dbReference type="PDB" id="1HYK">
    <property type="method" value="NMR"/>
    <property type="chains" value="A=87-132"/>
</dbReference>
<dbReference type="PDB" id="1MR0">
    <property type="method" value="NMR"/>
    <property type="chains" value="A=87-120"/>
</dbReference>
<dbReference type="PDBsum" id="1HYK"/>
<dbReference type="PDBsum" id="1MR0"/>
<dbReference type="SMR" id="O00253"/>
<dbReference type="BioGRID" id="106688">
    <property type="interactions" value="12"/>
</dbReference>
<dbReference type="FunCoup" id="O00253">
    <property type="interactions" value="86"/>
</dbReference>
<dbReference type="IntAct" id="O00253">
    <property type="interactions" value="9"/>
</dbReference>
<dbReference type="STRING" id="9606.ENSP00000290953"/>
<dbReference type="BioMuta" id="AGRP"/>
<dbReference type="MassIVE" id="O00253"/>
<dbReference type="PaxDb" id="9606-ENSP00000290953"/>
<dbReference type="PeptideAtlas" id="O00253"/>
<dbReference type="ProteomicsDB" id="47806"/>
<dbReference type="Antibodypedia" id="29554">
    <property type="antibodies" value="309 antibodies from 31 providers"/>
</dbReference>
<dbReference type="DNASU" id="181"/>
<dbReference type="Ensembl" id="ENST00000290953.3">
    <property type="protein sequence ID" value="ENSP00000290953.3"/>
    <property type="gene ID" value="ENSG00000159723.5"/>
</dbReference>
<dbReference type="GeneID" id="181"/>
<dbReference type="KEGG" id="hsa:181"/>
<dbReference type="MANE-Select" id="ENST00000290953.3">
    <property type="protein sequence ID" value="ENSP00000290953.3"/>
    <property type="RefSeq nucleotide sequence ID" value="NM_001138.2"/>
    <property type="RefSeq protein sequence ID" value="NP_001129.1"/>
</dbReference>
<dbReference type="UCSC" id="uc002etg.1">
    <property type="organism name" value="human"/>
</dbReference>
<dbReference type="AGR" id="HGNC:330"/>
<dbReference type="CTD" id="181"/>
<dbReference type="DisGeNET" id="181"/>
<dbReference type="GeneCards" id="AGRP"/>
<dbReference type="HGNC" id="HGNC:330">
    <property type="gene designation" value="AGRP"/>
</dbReference>
<dbReference type="HPA" id="ENSG00000159723">
    <property type="expression patterns" value="Group enriched (adrenal gland, brain, epididymis)"/>
</dbReference>
<dbReference type="MalaCards" id="AGRP"/>
<dbReference type="MIM" id="601665">
    <property type="type" value="phenotype"/>
</dbReference>
<dbReference type="MIM" id="602311">
    <property type="type" value="gene"/>
</dbReference>
<dbReference type="neXtProt" id="NX_O00253"/>
<dbReference type="OpenTargets" id="ENSG00000159723"/>
<dbReference type="PharmGKB" id="PA24627"/>
<dbReference type="VEuPathDB" id="HostDB:ENSG00000159723"/>
<dbReference type="eggNOG" id="ENOG502S7K0">
    <property type="taxonomic scope" value="Eukaryota"/>
</dbReference>
<dbReference type="GeneTree" id="ENSGT00940000154258"/>
<dbReference type="HOGENOM" id="CLU_103790_0_0_1"/>
<dbReference type="InParanoid" id="O00253"/>
<dbReference type="OMA" id="SWAMLQG"/>
<dbReference type="OrthoDB" id="9942042at2759"/>
<dbReference type="PAN-GO" id="O00253">
    <property type="GO annotations" value="6 GO annotations based on evolutionary models"/>
</dbReference>
<dbReference type="PhylomeDB" id="O00253"/>
<dbReference type="TreeFam" id="TF330729"/>
<dbReference type="PathwayCommons" id="O00253"/>
<dbReference type="Reactome" id="R-HSA-9615017">
    <property type="pathway name" value="FOXO-mediated transcription of oxidative stress, metabolic and neuronal genes"/>
</dbReference>
<dbReference type="SignaLink" id="O00253"/>
<dbReference type="SIGNOR" id="O00253"/>
<dbReference type="BioGRID-ORCS" id="181">
    <property type="hits" value="14 hits in 1140 CRISPR screens"/>
</dbReference>
<dbReference type="EvolutionaryTrace" id="O00253"/>
<dbReference type="GeneWiki" id="Agouti-related_peptide"/>
<dbReference type="GenomeRNAi" id="181"/>
<dbReference type="Pharos" id="O00253">
    <property type="development level" value="Tbio"/>
</dbReference>
<dbReference type="PRO" id="PR:O00253"/>
<dbReference type="Proteomes" id="UP000005640">
    <property type="component" value="Chromosome 16"/>
</dbReference>
<dbReference type="RNAct" id="O00253">
    <property type="molecule type" value="protein"/>
</dbReference>
<dbReference type="Bgee" id="ENSG00000159723">
    <property type="expression patterns" value="Expressed in left adrenal gland and 116 other cell types or tissues"/>
</dbReference>
<dbReference type="ExpressionAtlas" id="O00253">
    <property type="expression patterns" value="baseline and differential"/>
</dbReference>
<dbReference type="GO" id="GO:0005615">
    <property type="term" value="C:extracellular space"/>
    <property type="evidence" value="ECO:0000314"/>
    <property type="project" value="UniProtKB"/>
</dbReference>
<dbReference type="GO" id="GO:0005796">
    <property type="term" value="C:Golgi lumen"/>
    <property type="evidence" value="ECO:0000314"/>
    <property type="project" value="UniProtKB"/>
</dbReference>
<dbReference type="GO" id="GO:0043025">
    <property type="term" value="C:neuronal cell body"/>
    <property type="evidence" value="ECO:0007669"/>
    <property type="project" value="Ensembl"/>
</dbReference>
<dbReference type="GO" id="GO:0005184">
    <property type="term" value="F:neuropeptide hormone activity"/>
    <property type="evidence" value="ECO:0000314"/>
    <property type="project" value="UniProtKB"/>
</dbReference>
<dbReference type="GO" id="GO:0005102">
    <property type="term" value="F:signaling receptor binding"/>
    <property type="evidence" value="ECO:0000304"/>
    <property type="project" value="ProtInc"/>
</dbReference>
<dbReference type="GO" id="GO:0070996">
    <property type="term" value="F:type 1 melanocortin receptor binding"/>
    <property type="evidence" value="ECO:0000318"/>
    <property type="project" value="GO_Central"/>
</dbReference>
<dbReference type="GO" id="GO:0008343">
    <property type="term" value="P:adult feeding behavior"/>
    <property type="evidence" value="ECO:0000318"/>
    <property type="project" value="GO_Central"/>
</dbReference>
<dbReference type="GO" id="GO:0007623">
    <property type="term" value="P:circadian rhythm"/>
    <property type="evidence" value="ECO:0007669"/>
    <property type="project" value="Ensembl"/>
</dbReference>
<dbReference type="GO" id="GO:0042755">
    <property type="term" value="P:eating behavior"/>
    <property type="evidence" value="ECO:0007669"/>
    <property type="project" value="Ensembl"/>
</dbReference>
<dbReference type="GO" id="GO:0007631">
    <property type="term" value="P:feeding behavior"/>
    <property type="evidence" value="ECO:0000304"/>
    <property type="project" value="ProtInc"/>
</dbReference>
<dbReference type="GO" id="GO:0009755">
    <property type="term" value="P:hormone-mediated signaling pathway"/>
    <property type="evidence" value="ECO:0007669"/>
    <property type="project" value="InterPro"/>
</dbReference>
<dbReference type="GO" id="GO:0048571">
    <property type="term" value="P:long-day photoperiodism"/>
    <property type="evidence" value="ECO:0007669"/>
    <property type="project" value="Ensembl"/>
</dbReference>
<dbReference type="GO" id="GO:0060135">
    <property type="term" value="P:maternal process involved in female pregnancy"/>
    <property type="evidence" value="ECO:0007669"/>
    <property type="project" value="Ensembl"/>
</dbReference>
<dbReference type="GO" id="GO:0007218">
    <property type="term" value="P:neuropeptide signaling pathway"/>
    <property type="evidence" value="ECO:0000314"/>
    <property type="project" value="UniProtKB"/>
</dbReference>
<dbReference type="GO" id="GO:2000253">
    <property type="term" value="P:positive regulation of feeding behavior"/>
    <property type="evidence" value="ECO:0000318"/>
    <property type="project" value="GO_Central"/>
</dbReference>
<dbReference type="GO" id="GO:0060259">
    <property type="term" value="P:regulation of feeding behavior"/>
    <property type="evidence" value="ECO:0000314"/>
    <property type="project" value="UniProtKB"/>
</dbReference>
<dbReference type="GO" id="GO:0032868">
    <property type="term" value="P:response to insulin"/>
    <property type="evidence" value="ECO:0007669"/>
    <property type="project" value="Ensembl"/>
</dbReference>
<dbReference type="FunFam" id="4.10.760.10:FF:000001">
    <property type="entry name" value="Agouti-related protein"/>
    <property type="match status" value="1"/>
</dbReference>
<dbReference type="Gene3D" id="4.10.760.10">
    <property type="entry name" value="Agouti domain"/>
    <property type="match status" value="1"/>
</dbReference>
<dbReference type="InterPro" id="IPR007733">
    <property type="entry name" value="Agouti"/>
</dbReference>
<dbReference type="InterPro" id="IPR027300">
    <property type="entry name" value="Agouti_dom"/>
</dbReference>
<dbReference type="InterPro" id="IPR036836">
    <property type="entry name" value="Agouti_dom_sf"/>
</dbReference>
<dbReference type="PANTHER" id="PTHR16551">
    <property type="entry name" value="AGOUTI RELATED"/>
    <property type="match status" value="1"/>
</dbReference>
<dbReference type="PANTHER" id="PTHR16551:SF4">
    <property type="entry name" value="AGOUTI-RELATED PROTEIN"/>
    <property type="match status" value="1"/>
</dbReference>
<dbReference type="Pfam" id="PF05039">
    <property type="entry name" value="Agouti"/>
    <property type="match status" value="1"/>
</dbReference>
<dbReference type="SMART" id="SM00792">
    <property type="entry name" value="Agouti"/>
    <property type="match status" value="1"/>
</dbReference>
<dbReference type="SUPFAM" id="SSF57055">
    <property type="entry name" value="Agouti-related protein"/>
    <property type="match status" value="1"/>
</dbReference>
<dbReference type="PROSITE" id="PS60024">
    <property type="entry name" value="AGOUTI_1"/>
    <property type="match status" value="1"/>
</dbReference>
<dbReference type="PROSITE" id="PS51150">
    <property type="entry name" value="AGOUTI_2"/>
    <property type="match status" value="1"/>
</dbReference>
<accession>O00253</accession>
<accession>O15459</accession>
<accession>Q2TBD9</accession>
<organism>
    <name type="scientific">Homo sapiens</name>
    <name type="common">Human</name>
    <dbReference type="NCBI Taxonomy" id="9606"/>
    <lineage>
        <taxon>Eukaryota</taxon>
        <taxon>Metazoa</taxon>
        <taxon>Chordata</taxon>
        <taxon>Craniata</taxon>
        <taxon>Vertebrata</taxon>
        <taxon>Euteleostomi</taxon>
        <taxon>Mammalia</taxon>
        <taxon>Eutheria</taxon>
        <taxon>Euarchontoglires</taxon>
        <taxon>Primates</taxon>
        <taxon>Haplorrhini</taxon>
        <taxon>Catarrhini</taxon>
        <taxon>Hominidae</taxon>
        <taxon>Homo</taxon>
    </lineage>
</organism>
<name>AGRP_HUMAN</name>
<evidence type="ECO:0000250" key="1"/>
<evidence type="ECO:0000255" key="2"/>
<evidence type="ECO:0000255" key="3">
    <source>
        <dbReference type="PROSITE-ProRule" id="PRU00494"/>
    </source>
</evidence>
<evidence type="ECO:0000269" key="4">
    <source>
    </source>
</evidence>
<evidence type="ECO:0000269" key="5">
    <source>
    </source>
</evidence>
<evidence type="ECO:0000269" key="6">
    <source>
    </source>
</evidence>
<evidence type="ECO:0000269" key="7">
    <source>
    </source>
</evidence>
<evidence type="ECO:0000269" key="8">
    <source>
    </source>
</evidence>
<evidence type="ECO:0000269" key="9">
    <source>
    </source>
</evidence>
<evidence type="ECO:0000269" key="10">
    <source>
    </source>
</evidence>
<evidence type="ECO:0000269" key="11">
    <source>
    </source>
</evidence>
<evidence type="ECO:0000269" key="12">
    <source>
    </source>
</evidence>
<evidence type="ECO:0000269" key="13">
    <source>
    </source>
</evidence>
<evidence type="ECO:0000269" key="14">
    <source>
    </source>
</evidence>
<evidence type="ECO:0000305" key="15"/>
<evidence type="ECO:0007829" key="16">
    <source>
        <dbReference type="PDB" id="1HYK"/>
    </source>
</evidence>